<dbReference type="EC" id="3.4.21.-"/>
<dbReference type="PIR" id="S66558">
    <property type="entry name" value="S66558"/>
</dbReference>
<dbReference type="GO" id="GO:0005576">
    <property type="term" value="C:extracellular region"/>
    <property type="evidence" value="ECO:0007669"/>
    <property type="project" value="UniProtKB-SubCell"/>
</dbReference>
<dbReference type="GO" id="GO:0008236">
    <property type="term" value="F:serine-type peptidase activity"/>
    <property type="evidence" value="ECO:0007669"/>
    <property type="project" value="UniProtKB-KW"/>
</dbReference>
<dbReference type="GO" id="GO:0006508">
    <property type="term" value="P:proteolysis"/>
    <property type="evidence" value="ECO:0007669"/>
    <property type="project" value="UniProtKB-KW"/>
</dbReference>
<feature type="chain" id="PRO_0000298772" description="Serine proteinase">
    <location>
        <begin position="1"/>
        <end position="13" status="greater than"/>
    </location>
</feature>
<feature type="non-terminal residue" evidence="3">
    <location>
        <position position="13"/>
    </location>
</feature>
<name>SP01_SCEBO</name>
<protein>
    <recommendedName>
        <fullName>Serine proteinase</fullName>
        <ecNumber>3.4.21.-</ecNumber>
    </recommendedName>
</protein>
<comment type="function">
    <text evidence="2">Serine protease. Degrades fibrinogen.</text>
</comment>
<comment type="activity regulation">
    <text evidence="2">Strongly inhibited by pMSF, chymotrypsin and SDS. Inhibited by the trypsin inhibitors Tos-Phe-CH2Cl, Tos-Lys-CH2Cl and SBTI, and by bivalent cations. Slightly inhibited by the elastitinal and metal chelators EDTA and EGTA, by ethanol and by non-ionic detergents. Not inhibited by alkylating agents, reducing agents, pepstatin, o-phenanthroline, leupeptin, E-64, bestatin, DMSO and methanol.</text>
</comment>
<comment type="biophysicochemical properties">
    <kinetics>
        <KM evidence="2">0.35 mM for N-Suc-Ala-Ala-Pro-Phe-pNA</KM>
        <KM evidence="2">0.31 mM for N-Ac-Ile-Glu-Ala-Arg-pNA</KM>
        <KM evidence="2">2.59 mM for N-Suc-Ala-Ala-Pro-Leu-pNA</KM>
        <Vmax evidence="2">1032.0 umol/min/mg enzyme toward N-Suc-Ala-Ala-Pro-Phe- pNA</Vmax>
        <Vmax evidence="2">234.0 umol/min/mg enzyme toward N-Ac-Ile-Glu-Ala-Arg- pNA</Vmax>
        <Vmax evidence="2">613.0 umol/min/mg enzyme toward N-Suc-Ala-Ala-Pro-Leu- pNA</Vmax>
    </kinetics>
    <phDependence>
        <text evidence="2">Optimum pH is 9.0. 20% of maximum activity is seen at pH 5.0. Inactive below pH 5.0 and above pH 11.0, inactivation by acidic pH is reversible.</text>
    </phDependence>
    <temperatureDependence>
        <text evidence="2">Optimum temperature is 37-50 degrees Celsius. 49% of maximum activity is seen at 60 degrees Celsius, no activity is seen at 70 degrees Celsius. Thermolabile, a significant decrease in activity is seen after incubation at temperatures above 42 degrees Celsius for 20 minutes.</text>
    </temperatureDependence>
</comment>
<comment type="subunit">
    <text evidence="2">Monomer.</text>
</comment>
<comment type="subcellular location">
    <subcellularLocation>
        <location evidence="2">Secreted</location>
    </subcellularLocation>
</comment>
<comment type="PTM">
    <text evidence="2">Not glycosylated.</text>
</comment>
<comment type="similarity">
    <text evidence="1">Belongs to the peptidase S8 family.</text>
</comment>
<reference evidence="4" key="1">
    <citation type="journal article" date="1996" name="Biochem. J.">
        <title>A 33 kDa serine proteinase from Scedosporium apiospermum.</title>
        <authorList>
            <person name="Larcher G."/>
            <person name="Cimon B."/>
            <person name="Symoens F."/>
            <person name="Tronchin G."/>
            <person name="Chabasse D."/>
            <person name="Bouchara J.-P."/>
        </authorList>
    </citation>
    <scope>PROTEIN SEQUENCE</scope>
    <scope>FUNCTION</scope>
    <scope>ACTIVITY REGULATION</scope>
    <scope>BIOPHYSICOCHEMICAL PROPERTIES</scope>
    <scope>SUBUNIT</scope>
    <scope>SUBCELLULAR LOCATION</scope>
    <source>
        <strain evidence="2">4595.90</strain>
    </source>
</reference>
<organism>
    <name type="scientific">Scedosporium boydii</name>
    <name type="common">Pseudallescheria boydii</name>
    <dbReference type="NCBI Taxonomy" id="5597"/>
    <lineage>
        <taxon>Eukaryota</taxon>
        <taxon>Fungi</taxon>
        <taxon>Dikarya</taxon>
        <taxon>Ascomycota</taxon>
        <taxon>Pezizomycotina</taxon>
        <taxon>Sordariomycetes</taxon>
        <taxon>Hypocreomycetidae</taxon>
        <taxon>Microascales</taxon>
        <taxon>Microascaceae</taxon>
        <taxon>Scedosporium</taxon>
    </lineage>
</organism>
<accession>Q10721</accession>
<keyword id="KW-0903">Direct protein sequencing</keyword>
<keyword id="KW-0378">Hydrolase</keyword>
<keyword id="KW-0645">Protease</keyword>
<keyword id="KW-0964">Secreted</keyword>
<keyword id="KW-0720">Serine protease</keyword>
<proteinExistence type="evidence at protein level"/>
<evidence type="ECO:0000255" key="1"/>
<evidence type="ECO:0000269" key="2">
    <source>
    </source>
</evidence>
<evidence type="ECO:0000303" key="3">
    <source>
    </source>
</evidence>
<evidence type="ECO:0000305" key="4"/>
<sequence length="13" mass="1292">AYTGQTGAPWGLA</sequence>